<keyword id="KW-0002">3D-structure</keyword>
<keyword id="KW-1003">Cell membrane</keyword>
<keyword id="KW-0903">Direct protein sequencing</keyword>
<keyword id="KW-1015">Disulfide bond</keyword>
<keyword id="KW-0325">Glycoprotein</keyword>
<keyword id="KW-0393">Immunoglobulin domain</keyword>
<keyword id="KW-0472">Membrane</keyword>
<keyword id="KW-0597">Phosphoprotein</keyword>
<keyword id="KW-1185">Reference proteome</keyword>
<keyword id="KW-0732">Signal</keyword>
<keyword id="KW-0812">Transmembrane</keyword>
<keyword id="KW-1133">Transmembrane helix</keyword>
<comment type="function">
    <text evidence="3">Is an adhesion molecule necessary for normal myelination in the peripheral nervous system. It mediates adhesion between adjacent myelin wraps and ultimately drives myelin compaction.</text>
</comment>
<comment type="subunit">
    <text evidence="10">Homodimer and homotetramer.</text>
</comment>
<comment type="subcellular location">
    <subcellularLocation>
        <location evidence="3">Cell membrane</location>
        <topology evidence="3">Single-pass type I membrane protein</topology>
    </subcellularLocation>
</comment>
<comment type="tissue specificity">
    <text>Found only in peripheral nervous system Schwann cells.</text>
</comment>
<comment type="PTM">
    <text evidence="1">N-glycosylated; contains sulfate-substituted glycan.</text>
</comment>
<comment type="similarity">
    <text evidence="9">Belongs to the myelin P0 protein family.</text>
</comment>
<gene>
    <name type="primary">Mpz</name>
    <name type="synonym">P0</name>
</gene>
<accession>P06907</accession>
<name>MYP0_RAT</name>
<dbReference type="EMBL" id="K03242">
    <property type="protein sequence ID" value="AAA41576.1"/>
    <property type="molecule type" value="mRNA"/>
</dbReference>
<dbReference type="PIR" id="JQ0622">
    <property type="entry name" value="MPRT0"/>
</dbReference>
<dbReference type="RefSeq" id="NP_058723.2">
    <property type="nucleotide sequence ID" value="NM_017027.2"/>
</dbReference>
<dbReference type="PDB" id="1NEU">
    <property type="method" value="X-ray"/>
    <property type="resolution" value="1.90 A"/>
    <property type="chains" value="A=30-153"/>
</dbReference>
<dbReference type="PDBsum" id="1NEU"/>
<dbReference type="SMR" id="P06907"/>
<dbReference type="FunCoup" id="P06907">
    <property type="interactions" value="312"/>
</dbReference>
<dbReference type="STRING" id="10116.ENSRNOP00000004279"/>
<dbReference type="GlyCosmos" id="P06907">
    <property type="glycosylation" value="1 site, No reported glycans"/>
</dbReference>
<dbReference type="GlyGen" id="P06907">
    <property type="glycosylation" value="1 site"/>
</dbReference>
<dbReference type="iPTMnet" id="P06907"/>
<dbReference type="PhosphoSitePlus" id="P06907"/>
<dbReference type="SwissPalm" id="P06907"/>
<dbReference type="PaxDb" id="10116-ENSRNOP00000004279"/>
<dbReference type="GeneID" id="24564"/>
<dbReference type="KEGG" id="rno:24564"/>
<dbReference type="UCSC" id="RGD:3109">
    <property type="organism name" value="rat"/>
</dbReference>
<dbReference type="AGR" id="RGD:3109"/>
<dbReference type="CTD" id="4359"/>
<dbReference type="RGD" id="3109">
    <property type="gene designation" value="Mpz"/>
</dbReference>
<dbReference type="VEuPathDB" id="HostDB:ENSRNOG00000003171"/>
<dbReference type="eggNOG" id="ENOG502QVJ0">
    <property type="taxonomic scope" value="Eukaryota"/>
</dbReference>
<dbReference type="HOGENOM" id="CLU_090350_3_1_1"/>
<dbReference type="InParanoid" id="P06907"/>
<dbReference type="PhylomeDB" id="P06907"/>
<dbReference type="TreeFam" id="TF331728"/>
<dbReference type="EvolutionaryTrace" id="P06907"/>
<dbReference type="PRO" id="PR:P06907"/>
<dbReference type="Proteomes" id="UP000002494">
    <property type="component" value="Chromosome 13"/>
</dbReference>
<dbReference type="Bgee" id="ENSRNOG00000003171">
    <property type="expression patterns" value="Expressed in esophagus and 14 other cell types or tissues"/>
</dbReference>
<dbReference type="GO" id="GO:0016323">
    <property type="term" value="C:basolateral plasma membrane"/>
    <property type="evidence" value="ECO:0000314"/>
    <property type="project" value="RGD"/>
</dbReference>
<dbReference type="GO" id="GO:0005886">
    <property type="term" value="C:plasma membrane"/>
    <property type="evidence" value="ECO:0000315"/>
    <property type="project" value="CACAO"/>
</dbReference>
<dbReference type="GO" id="GO:0098743">
    <property type="term" value="P:cell aggregation"/>
    <property type="evidence" value="ECO:0000250"/>
    <property type="project" value="UniProtKB"/>
</dbReference>
<dbReference type="GO" id="GO:0098742">
    <property type="term" value="P:cell-cell adhesion via plasma-membrane adhesion molecules"/>
    <property type="evidence" value="ECO:0000250"/>
    <property type="project" value="UniProtKB"/>
</dbReference>
<dbReference type="GO" id="GO:0045217">
    <property type="term" value="P:cell-cell junction maintenance"/>
    <property type="evidence" value="ECO:0000266"/>
    <property type="project" value="RGD"/>
</dbReference>
<dbReference type="GO" id="GO:0042552">
    <property type="term" value="P:myelination"/>
    <property type="evidence" value="ECO:0000250"/>
    <property type="project" value="UniProtKB"/>
</dbReference>
<dbReference type="GO" id="GO:0043066">
    <property type="term" value="P:negative regulation of apoptotic process"/>
    <property type="evidence" value="ECO:0000315"/>
    <property type="project" value="RGD"/>
</dbReference>
<dbReference type="CDD" id="cd05879">
    <property type="entry name" value="IgV_P0"/>
    <property type="match status" value="1"/>
</dbReference>
<dbReference type="FunFam" id="2.60.40.10:FF:000193">
    <property type="entry name" value="Myelin protein zero-like 1 like"/>
    <property type="match status" value="1"/>
</dbReference>
<dbReference type="Gene3D" id="2.60.40.10">
    <property type="entry name" value="Immunoglobulins"/>
    <property type="match status" value="1"/>
</dbReference>
<dbReference type="InterPro" id="IPR007110">
    <property type="entry name" value="Ig-like_dom"/>
</dbReference>
<dbReference type="InterPro" id="IPR036179">
    <property type="entry name" value="Ig-like_dom_sf"/>
</dbReference>
<dbReference type="InterPro" id="IPR013783">
    <property type="entry name" value="Ig-like_fold"/>
</dbReference>
<dbReference type="InterPro" id="IPR003599">
    <property type="entry name" value="Ig_sub"/>
</dbReference>
<dbReference type="InterPro" id="IPR013106">
    <property type="entry name" value="Ig_V-set"/>
</dbReference>
<dbReference type="InterPro" id="IPR000920">
    <property type="entry name" value="Myelin_P0-rel"/>
</dbReference>
<dbReference type="InterPro" id="IPR019738">
    <property type="entry name" value="Myelin_P0_CS"/>
</dbReference>
<dbReference type="InterPro" id="IPR047014">
    <property type="entry name" value="Myelin_P0_Ig-like"/>
</dbReference>
<dbReference type="InterPro" id="IPR019566">
    <property type="entry name" value="MYP0_C"/>
</dbReference>
<dbReference type="PANTHER" id="PTHR13869">
    <property type="entry name" value="MYELIN P0 RELATED"/>
    <property type="match status" value="1"/>
</dbReference>
<dbReference type="PANTHER" id="PTHR13869:SF7">
    <property type="entry name" value="MYELIN PROTEIN P0"/>
    <property type="match status" value="1"/>
</dbReference>
<dbReference type="Pfam" id="PF10570">
    <property type="entry name" value="Myelin-PO_C"/>
    <property type="match status" value="1"/>
</dbReference>
<dbReference type="Pfam" id="PF07686">
    <property type="entry name" value="V-set"/>
    <property type="match status" value="1"/>
</dbReference>
<dbReference type="PRINTS" id="PR00213">
    <property type="entry name" value="MYELINP0"/>
</dbReference>
<dbReference type="SMART" id="SM00409">
    <property type="entry name" value="IG"/>
    <property type="match status" value="1"/>
</dbReference>
<dbReference type="SMART" id="SM00406">
    <property type="entry name" value="IGv"/>
    <property type="match status" value="1"/>
</dbReference>
<dbReference type="SUPFAM" id="SSF48726">
    <property type="entry name" value="Immunoglobulin"/>
    <property type="match status" value="1"/>
</dbReference>
<dbReference type="PROSITE" id="PS50835">
    <property type="entry name" value="IG_LIKE"/>
    <property type="match status" value="1"/>
</dbReference>
<dbReference type="PROSITE" id="PS00568">
    <property type="entry name" value="MYELIN_P0"/>
    <property type="match status" value="1"/>
</dbReference>
<feature type="signal peptide">
    <location>
        <begin position="1"/>
        <end position="29"/>
    </location>
</feature>
<feature type="chain" id="PRO_0000019302" description="Myelin protein P0">
    <location>
        <begin position="30"/>
        <end position="248"/>
    </location>
</feature>
<feature type="topological domain" description="Extracellular">
    <location>
        <begin position="30"/>
        <end position="153"/>
    </location>
</feature>
<feature type="transmembrane region" description="Helical">
    <location>
        <begin position="154"/>
        <end position="179"/>
    </location>
</feature>
<feature type="topological domain" description="Cytoplasmic">
    <location>
        <begin position="180"/>
        <end position="248"/>
    </location>
</feature>
<feature type="domain" description="Ig-like V-type">
    <location>
        <begin position="30"/>
        <end position="143"/>
    </location>
</feature>
<feature type="region of interest" description="Disordered" evidence="7">
    <location>
        <begin position="222"/>
        <end position="248"/>
    </location>
</feature>
<feature type="compositionally biased region" description="Basic and acidic residues" evidence="7">
    <location>
        <begin position="224"/>
        <end position="248"/>
    </location>
</feature>
<feature type="modified residue" description="Phosphoserine; by PKC" evidence="2">
    <location>
        <position position="210"/>
    </location>
</feature>
<feature type="modified residue" description="Phosphoserine" evidence="4">
    <location>
        <position position="226"/>
    </location>
</feature>
<feature type="modified residue" description="Phosphoserine" evidence="4">
    <location>
        <position position="228"/>
    </location>
</feature>
<feature type="modified residue" description="Phosphoserine; by PKC" evidence="2">
    <location>
        <position position="233"/>
    </location>
</feature>
<feature type="modified residue" description="Phosphoserine" evidence="4">
    <location>
        <position position="237"/>
    </location>
</feature>
<feature type="modified residue" description="Phosphoserine; by PKC" evidence="2">
    <location>
        <position position="243"/>
    </location>
</feature>
<feature type="glycosylation site" description="N-linked (GlcNAc...) (complex) asparagine" evidence="5">
    <location>
        <position position="122"/>
    </location>
</feature>
<feature type="disulfide bond" evidence="6 8">
    <location>
        <begin position="50"/>
        <end position="127"/>
    </location>
</feature>
<feature type="sequence conflict" description="In Ref. 1; AAA41576." evidence="9" ref="1">
    <original>G</original>
    <variation>R</variation>
    <location>
        <position position="43"/>
    </location>
</feature>
<feature type="strand" evidence="11">
    <location>
        <begin position="31"/>
        <end position="33"/>
    </location>
</feature>
<feature type="strand" evidence="11">
    <location>
        <begin position="36"/>
        <end position="41"/>
    </location>
</feature>
<feature type="strand" evidence="11">
    <location>
        <begin position="46"/>
        <end position="48"/>
    </location>
</feature>
<feature type="strand" evidence="11">
    <location>
        <begin position="51"/>
        <end position="53"/>
    </location>
</feature>
<feature type="strand" evidence="11">
    <location>
        <begin position="63"/>
        <end position="70"/>
    </location>
</feature>
<feature type="strand" evidence="11">
    <location>
        <begin position="77"/>
        <end position="83"/>
    </location>
</feature>
<feature type="strand" evidence="11">
    <location>
        <begin position="86"/>
        <end position="89"/>
    </location>
</feature>
<feature type="strand" evidence="11">
    <location>
        <begin position="91"/>
        <end position="93"/>
    </location>
</feature>
<feature type="turn" evidence="11">
    <location>
        <begin position="94"/>
        <end position="97"/>
    </location>
</feature>
<feature type="strand" evidence="11">
    <location>
        <begin position="99"/>
        <end position="101"/>
    </location>
</feature>
<feature type="helix" evidence="11">
    <location>
        <begin position="105"/>
        <end position="107"/>
    </location>
</feature>
<feature type="strand" evidence="11">
    <location>
        <begin position="112"/>
        <end position="114"/>
    </location>
</feature>
<feature type="helix" evidence="11">
    <location>
        <begin position="119"/>
        <end position="121"/>
    </location>
</feature>
<feature type="strand" evidence="11">
    <location>
        <begin position="123"/>
        <end position="130"/>
    </location>
</feature>
<feature type="strand" evidence="11">
    <location>
        <begin position="138"/>
        <end position="147"/>
    </location>
</feature>
<sequence length="248" mass="27571">MAPGAPSSSPSPILAALLFSSLVLSPTLAIVVYTDREVYGAVGSQVTLHCSFWSSEWVSDDISFTWRYQPEGGRDAISIFHYAKGQPYIDEVGTFKERIQWVGDPSWKDGSIVIHNLDYSDNGTFTCDVKNPPDIVGKTSQVTLYVFEKVPTRYGVVLGAVIGGILGVVLLLLLLFYLIRYCWLRRQAALQRRLSAMEKGKFHKSSKDSSKRGRQTPVLYAMLDHSRSTKAASEKKSKGLGESRKDKK</sequence>
<proteinExistence type="evidence at protein level"/>
<reference key="1">
    <citation type="journal article" date="1985" name="Cell">
        <title>Isolation and sequence of a cDNA encoding the major structural protein of peripheral myelin.</title>
        <authorList>
            <person name="Lemke G."/>
            <person name="Axel R."/>
        </authorList>
    </citation>
    <scope>NUCLEOTIDE SEQUENCE [MRNA]</scope>
</reference>
<reference key="2">
    <citation type="journal article" date="1988" name="Neuron">
        <title>Isolation and analysis of the gene encoding peripheral myelin protein zero.</title>
        <authorList>
            <person name="Lemke G."/>
            <person name="Lamar E."/>
            <person name="Patterson J."/>
        </authorList>
    </citation>
    <scope>NUCLEOTIDE SEQUENCE [MRNA]</scope>
</reference>
<reference key="3">
    <citation type="submission" date="2007-07" db="UniProtKB">
        <authorList>
            <person name="Lubec G."/>
            <person name="Kang S.U."/>
        </authorList>
    </citation>
    <scope>PROTEIN SEQUENCE OF 85-96</scope>
    <scope>IDENTIFICATION BY MASS SPECTROMETRY</scope>
    <source>
        <strain>Sprague-Dawley</strain>
        <tissue>Brain</tissue>
    </source>
</reference>
<reference key="4">
    <citation type="journal article" date="1996" name="Neuron">
        <title>Crystal structure of the extracellular domain from P0, the major structural protein of peripheral nerve myelin.</title>
        <authorList>
            <person name="Shapiro L."/>
            <person name="Doyle J.P."/>
            <person name="Hensley P."/>
            <person name="Colman D.R."/>
            <person name="Hendrickson W.A."/>
        </authorList>
    </citation>
    <scope>X-RAY CRYSTALLOGRAPHY (1.9 ANGSTROMS) OF 30-148</scope>
    <scope>SUBUNIT</scope>
    <scope>DISULFIDE BOND</scope>
</reference>
<organism>
    <name type="scientific">Rattus norvegicus</name>
    <name type="common">Rat</name>
    <dbReference type="NCBI Taxonomy" id="10116"/>
    <lineage>
        <taxon>Eukaryota</taxon>
        <taxon>Metazoa</taxon>
        <taxon>Chordata</taxon>
        <taxon>Craniata</taxon>
        <taxon>Vertebrata</taxon>
        <taxon>Euteleostomi</taxon>
        <taxon>Mammalia</taxon>
        <taxon>Eutheria</taxon>
        <taxon>Euarchontoglires</taxon>
        <taxon>Glires</taxon>
        <taxon>Rodentia</taxon>
        <taxon>Myomorpha</taxon>
        <taxon>Muroidea</taxon>
        <taxon>Muridae</taxon>
        <taxon>Murinae</taxon>
        <taxon>Rattus</taxon>
    </lineage>
</organism>
<protein>
    <recommendedName>
        <fullName>Myelin protein P0</fullName>
    </recommendedName>
    <alternativeName>
        <fullName>Myelin peripheral protein</fullName>
        <shortName>MPP</shortName>
    </alternativeName>
    <alternativeName>
        <fullName>Myelin protein zero</fullName>
    </alternativeName>
</protein>
<evidence type="ECO:0000250" key="1"/>
<evidence type="ECO:0000250" key="2">
    <source>
        <dbReference type="UniProtKB" id="P10522"/>
    </source>
</evidence>
<evidence type="ECO:0000250" key="3">
    <source>
        <dbReference type="UniProtKB" id="P25189"/>
    </source>
</evidence>
<evidence type="ECO:0000250" key="4">
    <source>
        <dbReference type="UniProtKB" id="P27573"/>
    </source>
</evidence>
<evidence type="ECO:0000255" key="5"/>
<evidence type="ECO:0000255" key="6">
    <source>
        <dbReference type="PROSITE-ProRule" id="PRU00114"/>
    </source>
</evidence>
<evidence type="ECO:0000256" key="7">
    <source>
        <dbReference type="SAM" id="MobiDB-lite"/>
    </source>
</evidence>
<evidence type="ECO:0000269" key="8">
    <source>
    </source>
</evidence>
<evidence type="ECO:0000305" key="9"/>
<evidence type="ECO:0000305" key="10">
    <source>
    </source>
</evidence>
<evidence type="ECO:0007829" key="11">
    <source>
        <dbReference type="PDB" id="1NEU"/>
    </source>
</evidence>